<evidence type="ECO:0000255" key="1"/>
<evidence type="ECO:0000256" key="2">
    <source>
        <dbReference type="SAM" id="MobiDB-lite"/>
    </source>
</evidence>
<evidence type="ECO:0000269" key="3">
    <source>
    </source>
</evidence>
<evidence type="ECO:0000269" key="4">
    <source>
    </source>
</evidence>
<evidence type="ECO:0000269" key="5">
    <source>
    </source>
</evidence>
<evidence type="ECO:0007744" key="6">
    <source>
    </source>
</evidence>
<evidence type="ECO:0007744" key="7">
    <source>
    </source>
</evidence>
<sequence>MRIEKHRTPLSKGIIWTILSVCLLFMFTTLILVIVATAGSTANYKPLTNIYIGEADIKHINVSKVIPQIGPILTILGSALTAPNSSLDDIFGAMKNIADTPALTPLLTLLSNADNTTVTIESLTELAPLAISGNPASSTRQLTEINGLLKYSDNATETLDGLSRLVSASLSSASSNSSSDSTTLVLDLLKDSDNPQNSTDALLTLNNLTMSEKAQLLPVFRLFAFSTNQTATMTALATLMNTTISSSLAQTLLTQLQNTISNGGSLNNTFSTLQPLVPQASAPAFDAVELLLNQTTSTNQTLSTLSDLLEQNLTQSSSAKKAFAALTQLMENSDNSTMVVTSVQSLAAVTNTTQSTQQLIGLDDVISSSSNTNETLSILSELQSGLSGNSSSVQYIPYLFSLLGASTDPKTTFSSLVTLTSWAQENPQTFLPILDILADAKSVQPISAEELNAMTPNILEYLKIPIYYRLSIFTLCHANLENKILDCNSPHAVQNLDFRSIIYDALVTSDFQPYLNALNISANDLYLEGKLLHREHQYVPAVRSVLALNLLAIIFSFFTMIFIILLYFNRYMFKQPLWLIALALHVCVGVATVLAAIIISVMIAIIKSGTADDKYGVVFKAGPAYTGLIWTAFALSFIATGLIIYTWWRNRRSGRYMSGSVTNRKGEIYTYGDGSAISADRFGDHNLGDDDDADFEKQVNRNEITAIDNSSSANNTDVTGSTSNRTELSHPDVTPKDSNGPVNNNAHLVA</sequence>
<gene>
    <name type="ordered locus">YKL187C</name>
</gene>
<comment type="subcellular location">
    <subcellularLocation>
        <location evidence="4">Mitochondrion</location>
    </subcellularLocation>
</comment>
<comment type="PTM">
    <text evidence="5">N-glycosylated.</text>
</comment>
<keyword id="KW-0325">Glycoprotein</keyword>
<keyword id="KW-1017">Isopeptide bond</keyword>
<keyword id="KW-0496">Mitochondrion</keyword>
<keyword id="KW-0597">Phosphoprotein</keyword>
<keyword id="KW-1185">Reference proteome</keyword>
<keyword id="KW-0832">Ubl conjugation</keyword>
<protein>
    <recommendedName>
        <fullName>Uncharacterized protein YKL187C</fullName>
    </recommendedName>
</protein>
<name>YKS7_YEAST</name>
<proteinExistence type="evidence at protein level"/>
<accession>P34231</accession>
<accession>D6VX13</accession>
<reference key="1">
    <citation type="journal article" date="1993" name="Yeast">
        <title>Sequencing and analysis of 51.6 kilobases on the left arm of chromosome XI from Saccharomyces cerevisiae reveals 23 open reading frames including the FAS1 gene.</title>
        <authorList>
            <person name="Wiemann S."/>
            <person name="Voss H."/>
            <person name="Schwager C."/>
            <person name="Rupp T."/>
            <person name="Stegemann J."/>
            <person name="Zimmermann J."/>
            <person name="Grothues D."/>
            <person name="Sensen C."/>
            <person name="Erfle H."/>
            <person name="Hewitt N."/>
            <person name="Banrevi A."/>
            <person name="Ansorge W."/>
        </authorList>
    </citation>
    <scope>NUCLEOTIDE SEQUENCE [GENOMIC DNA]</scope>
</reference>
<reference key="2">
    <citation type="journal article" date="1994" name="Nature">
        <title>Complete DNA sequence of yeast chromosome XI.</title>
        <authorList>
            <person name="Dujon B."/>
            <person name="Alexandraki D."/>
            <person name="Andre B."/>
            <person name="Ansorge W."/>
            <person name="Baladron V."/>
            <person name="Ballesta J.P.G."/>
            <person name="Banrevi A."/>
            <person name="Bolle P.-A."/>
            <person name="Bolotin-Fukuhara M."/>
            <person name="Bossier P."/>
            <person name="Bou G."/>
            <person name="Boyer J."/>
            <person name="Buitrago M.J."/>
            <person name="Cheret G."/>
            <person name="Colleaux L."/>
            <person name="Daignan-Fornier B."/>
            <person name="del Rey F."/>
            <person name="Dion C."/>
            <person name="Domdey H."/>
            <person name="Duesterhoeft A."/>
            <person name="Duesterhus S."/>
            <person name="Entian K.-D."/>
            <person name="Erfle H."/>
            <person name="Esteban P.F."/>
            <person name="Feldmann H."/>
            <person name="Fernandes L."/>
            <person name="Fobo G.M."/>
            <person name="Fritz C."/>
            <person name="Fukuhara H."/>
            <person name="Gabel C."/>
            <person name="Gaillon L."/>
            <person name="Garcia-Cantalejo J.M."/>
            <person name="Garcia-Ramirez J.J."/>
            <person name="Gent M.E."/>
            <person name="Ghazvini M."/>
            <person name="Goffeau A."/>
            <person name="Gonzalez A."/>
            <person name="Grothues D."/>
            <person name="Guerreiro P."/>
            <person name="Hegemann J.H."/>
            <person name="Hewitt N."/>
            <person name="Hilger F."/>
            <person name="Hollenberg C.P."/>
            <person name="Horaitis O."/>
            <person name="Indge K.J."/>
            <person name="Jacquier A."/>
            <person name="James C.M."/>
            <person name="Jauniaux J.-C."/>
            <person name="Jimenez A."/>
            <person name="Keuchel H."/>
            <person name="Kirchrath L."/>
            <person name="Kleine K."/>
            <person name="Koetter P."/>
            <person name="Legrain P."/>
            <person name="Liebl S."/>
            <person name="Louis E.J."/>
            <person name="Maia e Silva A."/>
            <person name="Marck C."/>
            <person name="Monnier A.-L."/>
            <person name="Moestl D."/>
            <person name="Mueller S."/>
            <person name="Obermaier B."/>
            <person name="Oliver S.G."/>
            <person name="Pallier C."/>
            <person name="Pascolo S."/>
            <person name="Pfeiffer F."/>
            <person name="Philippsen P."/>
            <person name="Planta R.J."/>
            <person name="Pohl F.M."/>
            <person name="Pohl T.M."/>
            <person name="Poehlmann R."/>
            <person name="Portetelle D."/>
            <person name="Purnelle B."/>
            <person name="Puzos V."/>
            <person name="Ramezani Rad M."/>
            <person name="Rasmussen S.W."/>
            <person name="Remacha M.A."/>
            <person name="Revuelta J.L."/>
            <person name="Richard G.-F."/>
            <person name="Rieger M."/>
            <person name="Rodrigues-Pousada C."/>
            <person name="Rose M."/>
            <person name="Rupp T."/>
            <person name="Santos M.A."/>
            <person name="Schwager C."/>
            <person name="Sensen C."/>
            <person name="Skala J."/>
            <person name="Soares H."/>
            <person name="Sor F."/>
            <person name="Stegemann J."/>
            <person name="Tettelin H."/>
            <person name="Thierry A."/>
            <person name="Tzermia M."/>
            <person name="Urrestarazu L.A."/>
            <person name="van Dyck L."/>
            <person name="van Vliet-Reedijk J.C."/>
            <person name="Valens M."/>
            <person name="Vandenbol M."/>
            <person name="Vilela C."/>
            <person name="Vissers S."/>
            <person name="von Wettstein D."/>
            <person name="Voss H."/>
            <person name="Wiemann S."/>
            <person name="Xu G."/>
            <person name="Zimmermann J."/>
            <person name="Haasemann M."/>
            <person name="Becker I."/>
            <person name="Mewes H.-W."/>
        </authorList>
    </citation>
    <scope>NUCLEOTIDE SEQUENCE [LARGE SCALE GENOMIC DNA]</scope>
    <source>
        <strain>ATCC 204508 / S288c</strain>
    </source>
</reference>
<reference key="3">
    <citation type="journal article" date="2014" name="G3 (Bethesda)">
        <title>The reference genome sequence of Saccharomyces cerevisiae: Then and now.</title>
        <authorList>
            <person name="Engel S.R."/>
            <person name="Dietrich F.S."/>
            <person name="Fisk D.G."/>
            <person name="Binkley G."/>
            <person name="Balakrishnan R."/>
            <person name="Costanzo M.C."/>
            <person name="Dwight S.S."/>
            <person name="Hitz B.C."/>
            <person name="Karra K."/>
            <person name="Nash R.S."/>
            <person name="Weng S."/>
            <person name="Wong E.D."/>
            <person name="Lloyd P."/>
            <person name="Skrzypek M.S."/>
            <person name="Miyasato S.R."/>
            <person name="Simison M."/>
            <person name="Cherry J.M."/>
        </authorList>
    </citation>
    <scope>GENOME REANNOTATION</scope>
    <source>
        <strain>ATCC 204508 / S288c</strain>
    </source>
</reference>
<reference key="4">
    <citation type="journal article" date="2003" name="Nat. Biotechnol.">
        <title>A proteomics approach to understanding protein ubiquitination.</title>
        <authorList>
            <person name="Peng J."/>
            <person name="Schwartz D."/>
            <person name="Elias J.E."/>
            <person name="Thoreen C.C."/>
            <person name="Cheng D."/>
            <person name="Marsischky G."/>
            <person name="Roelofs J."/>
            <person name="Finley D."/>
            <person name="Gygi S.P."/>
        </authorList>
    </citation>
    <scope>UBIQUITINATION [LARGE SCALE ANALYSIS] AT LYS-697</scope>
    <scope>IDENTIFICATION BY MASS SPECTROMETRY</scope>
    <source>
        <strain>SUB592</strain>
    </source>
</reference>
<reference key="5">
    <citation type="journal article" date="2003" name="Proc. Natl. Acad. Sci. U.S.A.">
        <title>The proteome of Saccharomyces cerevisiae mitochondria.</title>
        <authorList>
            <person name="Sickmann A."/>
            <person name="Reinders J."/>
            <person name="Wagner Y."/>
            <person name="Joppich C."/>
            <person name="Zahedi R.P."/>
            <person name="Meyer H.E."/>
            <person name="Schoenfisch B."/>
            <person name="Perschil I."/>
            <person name="Chacinska A."/>
            <person name="Guiard B."/>
            <person name="Rehling P."/>
            <person name="Pfanner N."/>
            <person name="Meisinger C."/>
        </authorList>
    </citation>
    <scope>SUBCELLULAR LOCATION [LARGE SCALE ANALYSIS]</scope>
    <source>
        <strain>ATCC 76625 / YPH499</strain>
    </source>
</reference>
<reference key="6">
    <citation type="journal article" date="2007" name="Mol. Cell. Proteomics">
        <title>Profiling phosphoproteins of yeast mitochondria reveals a role of phosphorylation in assembly of the ATP synthase.</title>
        <authorList>
            <person name="Reinders J."/>
            <person name="Wagner K."/>
            <person name="Zahedi R.P."/>
            <person name="Stojanovski D."/>
            <person name="Eyrich B."/>
            <person name="van der Laan M."/>
            <person name="Rehling P."/>
            <person name="Sickmann A."/>
            <person name="Pfanner N."/>
            <person name="Meisinger C."/>
        </authorList>
    </citation>
    <scope>PHOSPHORYLATION [LARGE SCALE ANALYSIS] AT SER-675 AND SER-678</scope>
    <scope>IDENTIFICATION BY MASS SPECTROMETRY [LARGE SCALE ANALYSIS]</scope>
    <source>
        <strain>ATCC 76625 / YPH499</strain>
    </source>
</reference>
<reference key="7">
    <citation type="journal article" date="2009" name="Mol. Syst. Biol.">
        <title>Global analysis of the glycoproteome in Saccharomyces cerevisiae reveals new roles for protein glycosylation in eukaryotes.</title>
        <authorList>
            <person name="Kung L.A."/>
            <person name="Tao S.-C."/>
            <person name="Qian J."/>
            <person name="Smith M.G."/>
            <person name="Snyder M."/>
            <person name="Zhu H."/>
        </authorList>
    </citation>
    <scope>GLYCOSYLATION [LARGE SCALE ANALYSIS]</scope>
</reference>
<reference key="8">
    <citation type="journal article" date="2009" name="Science">
        <title>Global analysis of Cdk1 substrate phosphorylation sites provides insights into evolution.</title>
        <authorList>
            <person name="Holt L.J."/>
            <person name="Tuch B.B."/>
            <person name="Villen J."/>
            <person name="Johnson A.D."/>
            <person name="Gygi S.P."/>
            <person name="Morgan D.O."/>
        </authorList>
    </citation>
    <scope>PHOSPHORYLATION [LARGE SCALE ANALYSIS] AT SER-678</scope>
    <scope>IDENTIFICATION BY MASS SPECTROMETRY [LARGE SCALE ANALYSIS]</scope>
</reference>
<feature type="chain" id="PRO_0000203136" description="Uncharacterized protein YKL187C">
    <location>
        <begin position="1"/>
        <end position="750"/>
    </location>
</feature>
<feature type="region of interest" description="Disordered" evidence="2">
    <location>
        <begin position="703"/>
        <end position="750"/>
    </location>
</feature>
<feature type="compositionally biased region" description="Polar residues" evidence="2">
    <location>
        <begin position="703"/>
        <end position="726"/>
    </location>
</feature>
<feature type="compositionally biased region" description="Polar residues" evidence="2">
    <location>
        <begin position="736"/>
        <end position="750"/>
    </location>
</feature>
<feature type="modified residue" description="Phosphoserine" evidence="6">
    <location>
        <position position="675"/>
    </location>
</feature>
<feature type="modified residue" description="Phosphoserine" evidence="6 7">
    <location>
        <position position="678"/>
    </location>
</feature>
<feature type="glycosylation site" description="N-linked (GlcNAc...) asparagine" evidence="1">
    <location>
        <position position="61"/>
    </location>
</feature>
<feature type="glycosylation site" description="N-linked (GlcNAc...) asparagine" evidence="1">
    <location>
        <position position="84"/>
    </location>
</feature>
<feature type="glycosylation site" description="N-linked (GlcNAc...) asparagine" evidence="1">
    <location>
        <position position="115"/>
    </location>
</feature>
<feature type="glycosylation site" description="N-linked (GlcNAc...) asparagine" evidence="1">
    <location>
        <position position="154"/>
    </location>
</feature>
<feature type="glycosylation site" description="N-linked (GlcNAc...) asparagine" evidence="1">
    <location>
        <position position="176"/>
    </location>
</feature>
<feature type="glycosylation site" description="N-linked (GlcNAc...) asparagine" evidence="1">
    <location>
        <position position="197"/>
    </location>
</feature>
<feature type="glycosylation site" description="N-linked (GlcNAc...) asparagine" evidence="1">
    <location>
        <position position="207"/>
    </location>
</feature>
<feature type="glycosylation site" description="N-linked (GlcNAc...) asparagine" evidence="1">
    <location>
        <position position="228"/>
    </location>
</feature>
<feature type="glycosylation site" description="N-linked (GlcNAc...) asparagine" evidence="1">
    <location>
        <position position="241"/>
    </location>
</feature>
<feature type="glycosylation site" description="N-linked (GlcNAc...) asparagine" evidence="1">
    <location>
        <position position="267"/>
    </location>
</feature>
<feature type="glycosylation site" description="N-linked (GlcNAc...) asparagine" evidence="1">
    <location>
        <position position="293"/>
    </location>
</feature>
<feature type="glycosylation site" description="N-linked (GlcNAc...) asparagine" evidence="1">
    <location>
        <position position="299"/>
    </location>
</feature>
<feature type="glycosylation site" description="N-linked (GlcNAc...) asparagine" evidence="1">
    <location>
        <position position="312"/>
    </location>
</feature>
<feature type="glycosylation site" description="N-linked (GlcNAc...) asparagine" evidence="1">
    <location>
        <position position="335"/>
    </location>
</feature>
<feature type="glycosylation site" description="N-linked (GlcNAc...) asparagine" evidence="1">
    <location>
        <position position="351"/>
    </location>
</feature>
<feature type="glycosylation site" description="N-linked (GlcNAc...) asparagine" evidence="1">
    <location>
        <position position="373"/>
    </location>
</feature>
<feature type="glycosylation site" description="N-linked (GlcNAc...) asparagine" evidence="1">
    <location>
        <position position="389"/>
    </location>
</feature>
<feature type="glycosylation site" description="N-linked (GlcNAc...) asparagine" evidence="1">
    <location>
        <position position="519"/>
    </location>
</feature>
<feature type="glycosylation site" description="N-linked (GlcNAc...) asparagine" evidence="1">
    <location>
        <position position="709"/>
    </location>
</feature>
<feature type="glycosylation site" description="N-linked (GlcNAc...) asparagine" evidence="1">
    <location>
        <position position="714"/>
    </location>
</feature>
<feature type="glycosylation site" description="N-linked (GlcNAc...) asparagine" evidence="1">
    <location>
        <position position="724"/>
    </location>
</feature>
<feature type="cross-link" description="Glycyl lysine isopeptide (Lys-Gly) (interchain with G-Cter in ubiquitin)" evidence="3">
    <location>
        <position position="697"/>
    </location>
</feature>
<dbReference type="EMBL" id="X74151">
    <property type="protein sequence ID" value="CAA52251.1"/>
    <property type="molecule type" value="Genomic_DNA"/>
</dbReference>
<dbReference type="EMBL" id="Z28187">
    <property type="protein sequence ID" value="CAA82030.1"/>
    <property type="molecule type" value="Genomic_DNA"/>
</dbReference>
<dbReference type="EMBL" id="BK006944">
    <property type="protein sequence ID" value="DAA08979.1"/>
    <property type="molecule type" value="Genomic_DNA"/>
</dbReference>
<dbReference type="PIR" id="S34683">
    <property type="entry name" value="S34683"/>
</dbReference>
<dbReference type="BioGRID" id="33935">
    <property type="interactions" value="22"/>
</dbReference>
<dbReference type="FunCoup" id="P34231">
    <property type="interactions" value="1"/>
</dbReference>
<dbReference type="IntAct" id="P34231">
    <property type="interactions" value="2"/>
</dbReference>
<dbReference type="STRING" id="4932.YKL187C"/>
<dbReference type="TCDB" id="1.H.1.4.4">
    <property type="family name" value="the claudin tight junction (claudin1) family"/>
</dbReference>
<dbReference type="GlyGen" id="P34231">
    <property type="glycosylation" value="21 sites"/>
</dbReference>
<dbReference type="iPTMnet" id="P34231"/>
<dbReference type="PaxDb" id="4932-YKL187C"/>
<dbReference type="PeptideAtlas" id="P34231"/>
<dbReference type="EnsemblFungi" id="YKL187C_mRNA">
    <property type="protein sequence ID" value="YKL187C"/>
    <property type="gene ID" value="YKL187C"/>
</dbReference>
<dbReference type="KEGG" id="sce:YKL187C"/>
<dbReference type="AGR" id="SGD:S000001670"/>
<dbReference type="SGD" id="S000001670">
    <property type="gene designation" value="YKL187C"/>
</dbReference>
<dbReference type="VEuPathDB" id="FungiDB:YKL187C"/>
<dbReference type="eggNOG" id="ENOG502QVQ9">
    <property type="taxonomic scope" value="Eukaryota"/>
</dbReference>
<dbReference type="GeneTree" id="ENSGT00940000176595"/>
<dbReference type="HOGENOM" id="CLU_402815_0_0_1"/>
<dbReference type="InParanoid" id="P34231"/>
<dbReference type="OMA" id="GEADIKH"/>
<dbReference type="OrthoDB" id="4068213at2759"/>
<dbReference type="BioCyc" id="YEAST:G3O-31950-MONOMER"/>
<dbReference type="BioGRID-ORCS" id="853648">
    <property type="hits" value="0 hits in 10 CRISPR screens"/>
</dbReference>
<dbReference type="PRO" id="PR:P34231"/>
<dbReference type="Proteomes" id="UP000002311">
    <property type="component" value="Chromosome XI"/>
</dbReference>
<dbReference type="RNAct" id="P34231">
    <property type="molecule type" value="protein"/>
</dbReference>
<dbReference type="GO" id="GO:0051285">
    <property type="term" value="C:cell cortex of cell tip"/>
    <property type="evidence" value="ECO:0000318"/>
    <property type="project" value="GO_Central"/>
</dbReference>
<dbReference type="GO" id="GO:0071944">
    <property type="term" value="C:cell periphery"/>
    <property type="evidence" value="ECO:0007005"/>
    <property type="project" value="SGD"/>
</dbReference>
<dbReference type="GO" id="GO:0005739">
    <property type="term" value="C:mitochondrion"/>
    <property type="evidence" value="ECO:0007005"/>
    <property type="project" value="SGD"/>
</dbReference>
<dbReference type="GO" id="GO:0005886">
    <property type="term" value="C:plasma membrane"/>
    <property type="evidence" value="ECO:0000318"/>
    <property type="project" value="GO_Central"/>
</dbReference>
<dbReference type="GO" id="GO:0031505">
    <property type="term" value="P:fungal-type cell wall organization"/>
    <property type="evidence" value="ECO:0000318"/>
    <property type="project" value="GO_Central"/>
</dbReference>
<dbReference type="GO" id="GO:0015909">
    <property type="term" value="P:long-chain fatty acid transport"/>
    <property type="evidence" value="ECO:0000315"/>
    <property type="project" value="SGD"/>
</dbReference>
<dbReference type="InterPro" id="IPR016024">
    <property type="entry name" value="ARM-type_fold"/>
</dbReference>
<dbReference type="InterPro" id="IPR009571">
    <property type="entry name" value="SUR7/Rim9-like_fungi"/>
</dbReference>
<dbReference type="InterPro" id="IPR052413">
    <property type="entry name" value="SUR7_domain"/>
</dbReference>
<dbReference type="PANTHER" id="PTHR28019">
    <property type="entry name" value="CELL MEMBRANE PROTEIN YLR413W-RELATED"/>
    <property type="match status" value="1"/>
</dbReference>
<dbReference type="PANTHER" id="PTHR28019:SF2">
    <property type="entry name" value="CELL MEMBRANE PROTEIN YLR413W-RELATED"/>
    <property type="match status" value="1"/>
</dbReference>
<dbReference type="Pfam" id="PF06687">
    <property type="entry name" value="SUR7"/>
    <property type="match status" value="1"/>
</dbReference>
<dbReference type="SUPFAM" id="SSF48371">
    <property type="entry name" value="ARM repeat"/>
    <property type="match status" value="1"/>
</dbReference>
<organism>
    <name type="scientific">Saccharomyces cerevisiae (strain ATCC 204508 / S288c)</name>
    <name type="common">Baker's yeast</name>
    <dbReference type="NCBI Taxonomy" id="559292"/>
    <lineage>
        <taxon>Eukaryota</taxon>
        <taxon>Fungi</taxon>
        <taxon>Dikarya</taxon>
        <taxon>Ascomycota</taxon>
        <taxon>Saccharomycotina</taxon>
        <taxon>Saccharomycetes</taxon>
        <taxon>Saccharomycetales</taxon>
        <taxon>Saccharomycetaceae</taxon>
        <taxon>Saccharomyces</taxon>
    </lineage>
</organism>